<organism>
    <name type="scientific">Wolbachia pipientis subsp. Culex pipiens (strain wPip)</name>
    <dbReference type="NCBI Taxonomy" id="570417"/>
    <lineage>
        <taxon>Bacteria</taxon>
        <taxon>Pseudomonadati</taxon>
        <taxon>Pseudomonadota</taxon>
        <taxon>Alphaproteobacteria</taxon>
        <taxon>Rickettsiales</taxon>
        <taxon>Anaplasmataceae</taxon>
        <taxon>Wolbachieae</taxon>
        <taxon>Wolbachia</taxon>
    </lineage>
</organism>
<sequence>MSIIINGKKTANDLCEELSKKIDILKKEYNVFPCLKVILVGSNPASQVYVRNKQRKAESIGISSETIVLPDSISEDELIEKVNTLNEDSSVHGILVQLPLPKHISASRIINTVSVEKDVDGFHDENVGRLVKGEKNCLIPCTPKGSLHLIKSVENNLSGKNAVIIGRSNIVGKPMFHLLLQENCTVTILHSQSRDLADYCSKADIVVAAVGKPNFVQPDWIKKGAIVIDVGINSINIGNQSKLVGDVDFEGVKEKVKAITPVPGGVGPMTIAFLMINTLVAACLQKGVDPSDFIA</sequence>
<feature type="chain" id="PRO_1000147537" description="Bifunctional protein FolD">
    <location>
        <begin position="1"/>
        <end position="295"/>
    </location>
</feature>
<feature type="binding site" evidence="1">
    <location>
        <begin position="166"/>
        <end position="168"/>
    </location>
    <ligand>
        <name>NADP(+)</name>
        <dbReference type="ChEBI" id="CHEBI:58349"/>
    </ligand>
</feature>
<feature type="binding site" evidence="1">
    <location>
        <position position="191"/>
    </location>
    <ligand>
        <name>NADP(+)</name>
        <dbReference type="ChEBI" id="CHEBI:58349"/>
    </ligand>
</feature>
<feature type="binding site" evidence="1">
    <location>
        <position position="232"/>
    </location>
    <ligand>
        <name>NADP(+)</name>
        <dbReference type="ChEBI" id="CHEBI:58349"/>
    </ligand>
</feature>
<reference key="1">
    <citation type="journal article" date="2008" name="Mol. Biol. Evol.">
        <title>Genome evolution of Wolbachia strain wPip from the Culex pipiens group.</title>
        <authorList>
            <person name="Klasson L."/>
            <person name="Walker T."/>
            <person name="Sebaihia M."/>
            <person name="Sanders M.J."/>
            <person name="Quail M.A."/>
            <person name="Lord A."/>
            <person name="Sanders S."/>
            <person name="Earl J."/>
            <person name="O'Neill S.L."/>
            <person name="Thomson N."/>
            <person name="Sinkins S.P."/>
            <person name="Parkhill J."/>
        </authorList>
    </citation>
    <scope>NUCLEOTIDE SEQUENCE [LARGE SCALE GENOMIC DNA]</scope>
    <source>
        <strain>wPip</strain>
    </source>
</reference>
<protein>
    <recommendedName>
        <fullName evidence="1">Bifunctional protein FolD</fullName>
    </recommendedName>
    <domain>
        <recommendedName>
            <fullName evidence="1">Methylenetetrahydrofolate dehydrogenase</fullName>
            <ecNumber evidence="1">1.5.1.5</ecNumber>
        </recommendedName>
    </domain>
    <domain>
        <recommendedName>
            <fullName evidence="1">Methenyltetrahydrofolate cyclohydrolase</fullName>
            <ecNumber evidence="1">3.5.4.9</ecNumber>
        </recommendedName>
    </domain>
</protein>
<dbReference type="EC" id="1.5.1.5" evidence="1"/>
<dbReference type="EC" id="3.5.4.9" evidence="1"/>
<dbReference type="EMBL" id="AM999887">
    <property type="protein sequence ID" value="CAQ54852.1"/>
    <property type="molecule type" value="Genomic_DNA"/>
</dbReference>
<dbReference type="RefSeq" id="WP_007302160.1">
    <property type="nucleotide sequence ID" value="NC_010981.1"/>
</dbReference>
<dbReference type="SMR" id="B3CLT4"/>
<dbReference type="KEGG" id="wpi:WP0744"/>
<dbReference type="eggNOG" id="COG0190">
    <property type="taxonomic scope" value="Bacteria"/>
</dbReference>
<dbReference type="HOGENOM" id="CLU_034045_1_2_5"/>
<dbReference type="UniPathway" id="UPA00193"/>
<dbReference type="Proteomes" id="UP000008814">
    <property type="component" value="Chromosome"/>
</dbReference>
<dbReference type="GO" id="GO:0005829">
    <property type="term" value="C:cytosol"/>
    <property type="evidence" value="ECO:0007669"/>
    <property type="project" value="TreeGrafter"/>
</dbReference>
<dbReference type="GO" id="GO:0004477">
    <property type="term" value="F:methenyltetrahydrofolate cyclohydrolase activity"/>
    <property type="evidence" value="ECO:0007669"/>
    <property type="project" value="UniProtKB-UniRule"/>
</dbReference>
<dbReference type="GO" id="GO:0004488">
    <property type="term" value="F:methylenetetrahydrofolate dehydrogenase (NADP+) activity"/>
    <property type="evidence" value="ECO:0007669"/>
    <property type="project" value="UniProtKB-UniRule"/>
</dbReference>
<dbReference type="GO" id="GO:0000105">
    <property type="term" value="P:L-histidine biosynthetic process"/>
    <property type="evidence" value="ECO:0007669"/>
    <property type="project" value="UniProtKB-KW"/>
</dbReference>
<dbReference type="GO" id="GO:0009086">
    <property type="term" value="P:methionine biosynthetic process"/>
    <property type="evidence" value="ECO:0007669"/>
    <property type="project" value="UniProtKB-KW"/>
</dbReference>
<dbReference type="GO" id="GO:0006164">
    <property type="term" value="P:purine nucleotide biosynthetic process"/>
    <property type="evidence" value="ECO:0007669"/>
    <property type="project" value="UniProtKB-KW"/>
</dbReference>
<dbReference type="GO" id="GO:0035999">
    <property type="term" value="P:tetrahydrofolate interconversion"/>
    <property type="evidence" value="ECO:0007669"/>
    <property type="project" value="UniProtKB-UniRule"/>
</dbReference>
<dbReference type="CDD" id="cd01080">
    <property type="entry name" value="NAD_bind_m-THF_DH_Cyclohyd"/>
    <property type="match status" value="1"/>
</dbReference>
<dbReference type="FunFam" id="3.40.50.720:FF:000006">
    <property type="entry name" value="Bifunctional protein FolD"/>
    <property type="match status" value="1"/>
</dbReference>
<dbReference type="FunFam" id="3.40.50.10860:FF:000005">
    <property type="entry name" value="C-1-tetrahydrofolate synthase, cytoplasmic, putative"/>
    <property type="match status" value="1"/>
</dbReference>
<dbReference type="Gene3D" id="3.40.50.10860">
    <property type="entry name" value="Leucine Dehydrogenase, chain A, domain 1"/>
    <property type="match status" value="1"/>
</dbReference>
<dbReference type="Gene3D" id="3.40.50.720">
    <property type="entry name" value="NAD(P)-binding Rossmann-like Domain"/>
    <property type="match status" value="1"/>
</dbReference>
<dbReference type="HAMAP" id="MF_01576">
    <property type="entry name" value="THF_DHG_CYH"/>
    <property type="match status" value="1"/>
</dbReference>
<dbReference type="InterPro" id="IPR046346">
    <property type="entry name" value="Aminoacid_DH-like_N_sf"/>
</dbReference>
<dbReference type="InterPro" id="IPR036291">
    <property type="entry name" value="NAD(P)-bd_dom_sf"/>
</dbReference>
<dbReference type="InterPro" id="IPR000672">
    <property type="entry name" value="THF_DH/CycHdrlase"/>
</dbReference>
<dbReference type="InterPro" id="IPR020630">
    <property type="entry name" value="THF_DH/CycHdrlase_cat_dom"/>
</dbReference>
<dbReference type="InterPro" id="IPR020867">
    <property type="entry name" value="THF_DH/CycHdrlase_CS"/>
</dbReference>
<dbReference type="InterPro" id="IPR020631">
    <property type="entry name" value="THF_DH/CycHdrlase_NAD-bd_dom"/>
</dbReference>
<dbReference type="NCBIfam" id="NF010784">
    <property type="entry name" value="PRK14187.1"/>
    <property type="match status" value="1"/>
</dbReference>
<dbReference type="NCBIfam" id="NF010785">
    <property type="entry name" value="PRK14188.1"/>
    <property type="match status" value="1"/>
</dbReference>
<dbReference type="PANTHER" id="PTHR48099:SF5">
    <property type="entry name" value="C-1-TETRAHYDROFOLATE SYNTHASE, CYTOPLASMIC"/>
    <property type="match status" value="1"/>
</dbReference>
<dbReference type="PANTHER" id="PTHR48099">
    <property type="entry name" value="C-1-TETRAHYDROFOLATE SYNTHASE, CYTOPLASMIC-RELATED"/>
    <property type="match status" value="1"/>
</dbReference>
<dbReference type="Pfam" id="PF00763">
    <property type="entry name" value="THF_DHG_CYH"/>
    <property type="match status" value="1"/>
</dbReference>
<dbReference type="Pfam" id="PF02882">
    <property type="entry name" value="THF_DHG_CYH_C"/>
    <property type="match status" value="1"/>
</dbReference>
<dbReference type="PRINTS" id="PR00085">
    <property type="entry name" value="THFDHDRGNASE"/>
</dbReference>
<dbReference type="SUPFAM" id="SSF53223">
    <property type="entry name" value="Aminoacid dehydrogenase-like, N-terminal domain"/>
    <property type="match status" value="1"/>
</dbReference>
<dbReference type="SUPFAM" id="SSF51735">
    <property type="entry name" value="NAD(P)-binding Rossmann-fold domains"/>
    <property type="match status" value="1"/>
</dbReference>
<dbReference type="PROSITE" id="PS00766">
    <property type="entry name" value="THF_DHG_CYH_1"/>
    <property type="match status" value="1"/>
</dbReference>
<dbReference type="PROSITE" id="PS00767">
    <property type="entry name" value="THF_DHG_CYH_2"/>
    <property type="match status" value="1"/>
</dbReference>
<gene>
    <name evidence="1" type="primary">folD</name>
    <name type="ordered locus">WP0744</name>
</gene>
<comment type="function">
    <text evidence="1">Catalyzes the oxidation of 5,10-methylenetetrahydrofolate to 5,10-methenyltetrahydrofolate and then the hydrolysis of 5,10-methenyltetrahydrofolate to 10-formyltetrahydrofolate.</text>
</comment>
<comment type="catalytic activity">
    <reaction evidence="1">
        <text>(6R)-5,10-methylene-5,6,7,8-tetrahydrofolate + NADP(+) = (6R)-5,10-methenyltetrahydrofolate + NADPH</text>
        <dbReference type="Rhea" id="RHEA:22812"/>
        <dbReference type="ChEBI" id="CHEBI:15636"/>
        <dbReference type="ChEBI" id="CHEBI:57455"/>
        <dbReference type="ChEBI" id="CHEBI:57783"/>
        <dbReference type="ChEBI" id="CHEBI:58349"/>
        <dbReference type="EC" id="1.5.1.5"/>
    </reaction>
</comment>
<comment type="catalytic activity">
    <reaction evidence="1">
        <text>(6R)-5,10-methenyltetrahydrofolate + H2O = (6R)-10-formyltetrahydrofolate + H(+)</text>
        <dbReference type="Rhea" id="RHEA:23700"/>
        <dbReference type="ChEBI" id="CHEBI:15377"/>
        <dbReference type="ChEBI" id="CHEBI:15378"/>
        <dbReference type="ChEBI" id="CHEBI:57455"/>
        <dbReference type="ChEBI" id="CHEBI:195366"/>
        <dbReference type="EC" id="3.5.4.9"/>
    </reaction>
</comment>
<comment type="pathway">
    <text evidence="1">One-carbon metabolism; tetrahydrofolate interconversion.</text>
</comment>
<comment type="subunit">
    <text evidence="1">Homodimer.</text>
</comment>
<comment type="similarity">
    <text evidence="1">Belongs to the tetrahydrofolate dehydrogenase/cyclohydrolase family.</text>
</comment>
<proteinExistence type="inferred from homology"/>
<accession>B3CLT4</accession>
<evidence type="ECO:0000255" key="1">
    <source>
        <dbReference type="HAMAP-Rule" id="MF_01576"/>
    </source>
</evidence>
<name>FOLD_WOLPP</name>
<keyword id="KW-0028">Amino-acid biosynthesis</keyword>
<keyword id="KW-0368">Histidine biosynthesis</keyword>
<keyword id="KW-0378">Hydrolase</keyword>
<keyword id="KW-0486">Methionine biosynthesis</keyword>
<keyword id="KW-0511">Multifunctional enzyme</keyword>
<keyword id="KW-0521">NADP</keyword>
<keyword id="KW-0554">One-carbon metabolism</keyword>
<keyword id="KW-0560">Oxidoreductase</keyword>
<keyword id="KW-0658">Purine biosynthesis</keyword>